<organism>
    <name type="scientific">Aliivibrio fischeri (strain ATCC 700601 / ES114)</name>
    <name type="common">Vibrio fischeri</name>
    <dbReference type="NCBI Taxonomy" id="312309"/>
    <lineage>
        <taxon>Bacteria</taxon>
        <taxon>Pseudomonadati</taxon>
        <taxon>Pseudomonadota</taxon>
        <taxon>Gammaproteobacteria</taxon>
        <taxon>Vibrionales</taxon>
        <taxon>Vibrionaceae</taxon>
        <taxon>Aliivibrio</taxon>
    </lineage>
</organism>
<dbReference type="EC" id="2.1.1.297" evidence="1"/>
<dbReference type="EMBL" id="CP000020">
    <property type="protein sequence ID" value="AAW85264.1"/>
    <property type="molecule type" value="Genomic_DNA"/>
</dbReference>
<dbReference type="RefSeq" id="WP_011261470.1">
    <property type="nucleotide sequence ID" value="NC_006840.2"/>
</dbReference>
<dbReference type="RefSeq" id="YP_204152.1">
    <property type="nucleotide sequence ID" value="NC_006840.2"/>
</dbReference>
<dbReference type="SMR" id="Q5E6T2"/>
<dbReference type="STRING" id="312309.VF_0769"/>
<dbReference type="EnsemblBacteria" id="AAW85264">
    <property type="protein sequence ID" value="AAW85264"/>
    <property type="gene ID" value="VF_0769"/>
</dbReference>
<dbReference type="GeneID" id="54163436"/>
<dbReference type="KEGG" id="vfi:VF_0769"/>
<dbReference type="PATRIC" id="fig|312309.11.peg.761"/>
<dbReference type="eggNOG" id="COG2890">
    <property type="taxonomic scope" value="Bacteria"/>
</dbReference>
<dbReference type="HOGENOM" id="CLU_018398_3_1_6"/>
<dbReference type="OrthoDB" id="9800643at2"/>
<dbReference type="Proteomes" id="UP000000537">
    <property type="component" value="Chromosome I"/>
</dbReference>
<dbReference type="GO" id="GO:0003676">
    <property type="term" value="F:nucleic acid binding"/>
    <property type="evidence" value="ECO:0007669"/>
    <property type="project" value="InterPro"/>
</dbReference>
<dbReference type="GO" id="GO:0102559">
    <property type="term" value="F:protein-(glutamine-N5) methyltransferase activity"/>
    <property type="evidence" value="ECO:0007669"/>
    <property type="project" value="UniProtKB-EC"/>
</dbReference>
<dbReference type="GO" id="GO:0036009">
    <property type="term" value="F:protein-glutamine N-methyltransferase activity"/>
    <property type="evidence" value="ECO:0007669"/>
    <property type="project" value="UniProtKB-UniRule"/>
</dbReference>
<dbReference type="GO" id="GO:0032259">
    <property type="term" value="P:methylation"/>
    <property type="evidence" value="ECO:0007669"/>
    <property type="project" value="UniProtKB-KW"/>
</dbReference>
<dbReference type="CDD" id="cd02440">
    <property type="entry name" value="AdoMet_MTases"/>
    <property type="match status" value="1"/>
</dbReference>
<dbReference type="FunFam" id="1.10.8.10:FF:000032">
    <property type="entry name" value="Release factor glutamine methyltransferase"/>
    <property type="match status" value="1"/>
</dbReference>
<dbReference type="FunFam" id="3.40.50.150:FF:000053">
    <property type="entry name" value="Release factor glutamine methyltransferase"/>
    <property type="match status" value="1"/>
</dbReference>
<dbReference type="Gene3D" id="1.10.8.10">
    <property type="entry name" value="DNA helicase RuvA subunit, C-terminal domain"/>
    <property type="match status" value="1"/>
</dbReference>
<dbReference type="Gene3D" id="3.40.50.150">
    <property type="entry name" value="Vaccinia Virus protein VP39"/>
    <property type="match status" value="1"/>
</dbReference>
<dbReference type="HAMAP" id="MF_02126">
    <property type="entry name" value="RF_methyltr_PrmC"/>
    <property type="match status" value="1"/>
</dbReference>
<dbReference type="InterPro" id="IPR002052">
    <property type="entry name" value="DNA_methylase_N6_adenine_CS"/>
</dbReference>
<dbReference type="InterPro" id="IPR004556">
    <property type="entry name" value="HemK-like"/>
</dbReference>
<dbReference type="InterPro" id="IPR025714">
    <property type="entry name" value="Methyltranfer_dom"/>
</dbReference>
<dbReference type="InterPro" id="IPR050320">
    <property type="entry name" value="N5-glutamine_MTase"/>
</dbReference>
<dbReference type="InterPro" id="IPR040758">
    <property type="entry name" value="PrmC_N"/>
</dbReference>
<dbReference type="InterPro" id="IPR019874">
    <property type="entry name" value="RF_methyltr_PrmC"/>
</dbReference>
<dbReference type="InterPro" id="IPR029063">
    <property type="entry name" value="SAM-dependent_MTases_sf"/>
</dbReference>
<dbReference type="NCBIfam" id="TIGR00536">
    <property type="entry name" value="hemK_fam"/>
    <property type="match status" value="1"/>
</dbReference>
<dbReference type="NCBIfam" id="TIGR03534">
    <property type="entry name" value="RF_mod_PrmC"/>
    <property type="match status" value="1"/>
</dbReference>
<dbReference type="PANTHER" id="PTHR18895">
    <property type="entry name" value="HEMK METHYLTRANSFERASE"/>
    <property type="match status" value="1"/>
</dbReference>
<dbReference type="PANTHER" id="PTHR18895:SF74">
    <property type="entry name" value="MTRF1L RELEASE FACTOR GLUTAMINE METHYLTRANSFERASE"/>
    <property type="match status" value="1"/>
</dbReference>
<dbReference type="Pfam" id="PF13847">
    <property type="entry name" value="Methyltransf_31"/>
    <property type="match status" value="1"/>
</dbReference>
<dbReference type="Pfam" id="PF17827">
    <property type="entry name" value="PrmC_N"/>
    <property type="match status" value="1"/>
</dbReference>
<dbReference type="SUPFAM" id="SSF53335">
    <property type="entry name" value="S-adenosyl-L-methionine-dependent methyltransferases"/>
    <property type="match status" value="1"/>
</dbReference>
<gene>
    <name evidence="1" type="primary">prmC</name>
    <name type="ordered locus">VF_0769</name>
</gene>
<name>PRMC_ALIF1</name>
<evidence type="ECO:0000255" key="1">
    <source>
        <dbReference type="HAMAP-Rule" id="MF_02126"/>
    </source>
</evidence>
<keyword id="KW-0489">Methyltransferase</keyword>
<keyword id="KW-1185">Reference proteome</keyword>
<keyword id="KW-0949">S-adenosyl-L-methionine</keyword>
<keyword id="KW-0808">Transferase</keyword>
<proteinExistence type="inferred from homology"/>
<protein>
    <recommendedName>
        <fullName evidence="1">Release factor glutamine methyltransferase</fullName>
        <shortName evidence="1">RF MTase</shortName>
        <ecNumber evidence="1">2.1.1.297</ecNumber>
    </recommendedName>
    <alternativeName>
        <fullName evidence="1">N5-glutamine methyltransferase PrmC</fullName>
    </alternativeName>
    <alternativeName>
        <fullName evidence="1">Protein-(glutamine-N5) MTase PrmC</fullName>
    </alternativeName>
    <alternativeName>
        <fullName evidence="1">Protein-glutamine N-methyltransferase PrmC</fullName>
    </alternativeName>
</protein>
<feature type="chain" id="PRO_0000414549" description="Release factor glutamine methyltransferase">
    <location>
        <begin position="1"/>
        <end position="284"/>
    </location>
</feature>
<feature type="binding site" evidence="1">
    <location>
        <begin position="121"/>
        <end position="125"/>
    </location>
    <ligand>
        <name>S-adenosyl-L-methionine</name>
        <dbReference type="ChEBI" id="CHEBI:59789"/>
    </ligand>
</feature>
<feature type="binding site" evidence="1">
    <location>
        <position position="144"/>
    </location>
    <ligand>
        <name>S-adenosyl-L-methionine</name>
        <dbReference type="ChEBI" id="CHEBI:59789"/>
    </ligand>
</feature>
<feature type="binding site" evidence="1">
    <location>
        <position position="172"/>
    </location>
    <ligand>
        <name>S-adenosyl-L-methionine</name>
        <dbReference type="ChEBI" id="CHEBI:59789"/>
    </ligand>
</feature>
<feature type="binding site" evidence="1">
    <location>
        <begin position="188"/>
        <end position="191"/>
    </location>
    <ligand>
        <name>substrate</name>
    </ligand>
</feature>
<feature type="binding site" evidence="1">
    <location>
        <position position="188"/>
    </location>
    <ligand>
        <name>S-adenosyl-L-methionine</name>
        <dbReference type="ChEBI" id="CHEBI:59789"/>
    </ligand>
</feature>
<accession>Q5E6T2</accession>
<reference key="1">
    <citation type="journal article" date="2005" name="Proc. Natl. Acad. Sci. U.S.A.">
        <title>Complete genome sequence of Vibrio fischeri: a symbiotic bacterium with pathogenic congeners.</title>
        <authorList>
            <person name="Ruby E.G."/>
            <person name="Urbanowski M."/>
            <person name="Campbell J."/>
            <person name="Dunn A."/>
            <person name="Faini M."/>
            <person name="Gunsalus R."/>
            <person name="Lostroh P."/>
            <person name="Lupp C."/>
            <person name="McCann J."/>
            <person name="Millikan D."/>
            <person name="Schaefer A."/>
            <person name="Stabb E."/>
            <person name="Stevens A."/>
            <person name="Visick K."/>
            <person name="Whistler C."/>
            <person name="Greenberg E.P."/>
        </authorList>
    </citation>
    <scope>NUCLEOTIDE SEQUENCE [LARGE SCALE GENOMIC DNA]</scope>
    <source>
        <strain>ATCC 700601 / ES114</strain>
    </source>
</reference>
<sequence>MSLSIEALLKRSIQSLTLEGSDSPQVDAAVLLCHVLDKPRSYLLTWPEKIVSDEELGNFNALLERRLAGEPIAYIVGYREFWSLPLKVSPTTLIPRPDTERLVEVALDHLTPNAQSILDLGTGTGAIALAIASEMPTLNVIGVDYQDDAVELAKGNAKINHINNVEFRQGSWFEPISLSDKFDIIVSNPPYIDGNDPHLSEGDVRFEPQTALVAEQNGFSDLIHIMQHGREYLLNGGWLMMEHGFEQGEQLRHFFEEHGYINVKTEQDYAGNDRVTLGQWVVDN</sequence>
<comment type="function">
    <text evidence="1">Methylates the class 1 translation termination release factors RF1/PrfA and RF2/PrfB on the glutamine residue of the universally conserved GGQ motif.</text>
</comment>
<comment type="catalytic activity">
    <reaction evidence="1">
        <text>L-glutaminyl-[peptide chain release factor] + S-adenosyl-L-methionine = N(5)-methyl-L-glutaminyl-[peptide chain release factor] + S-adenosyl-L-homocysteine + H(+)</text>
        <dbReference type="Rhea" id="RHEA:42896"/>
        <dbReference type="Rhea" id="RHEA-COMP:10271"/>
        <dbReference type="Rhea" id="RHEA-COMP:10272"/>
        <dbReference type="ChEBI" id="CHEBI:15378"/>
        <dbReference type="ChEBI" id="CHEBI:30011"/>
        <dbReference type="ChEBI" id="CHEBI:57856"/>
        <dbReference type="ChEBI" id="CHEBI:59789"/>
        <dbReference type="ChEBI" id="CHEBI:61891"/>
        <dbReference type="EC" id="2.1.1.297"/>
    </reaction>
</comment>
<comment type="similarity">
    <text evidence="1">Belongs to the protein N5-glutamine methyltransferase family. PrmC subfamily.</text>
</comment>